<feature type="chain" id="PRO_0000275596" description="NAD(P)H-quinone oxidoreductase subunit 2 A, chloroplastic">
    <location>
        <begin position="1"/>
        <end position="510"/>
    </location>
</feature>
<feature type="transmembrane region" description="Helical" evidence="1">
    <location>
        <begin position="24"/>
        <end position="44"/>
    </location>
</feature>
<feature type="transmembrane region" description="Helical" evidence="1">
    <location>
        <begin position="57"/>
        <end position="77"/>
    </location>
</feature>
<feature type="transmembrane region" description="Helical" evidence="1">
    <location>
        <begin position="99"/>
        <end position="119"/>
    </location>
</feature>
<feature type="transmembrane region" description="Helical" evidence="1">
    <location>
        <begin position="124"/>
        <end position="144"/>
    </location>
</feature>
<feature type="transmembrane region" description="Helical" evidence="1">
    <location>
        <begin position="149"/>
        <end position="169"/>
    </location>
</feature>
<feature type="transmembrane region" description="Helical" evidence="1">
    <location>
        <begin position="183"/>
        <end position="203"/>
    </location>
</feature>
<feature type="transmembrane region" description="Helical" evidence="1">
    <location>
        <begin position="227"/>
        <end position="247"/>
    </location>
</feature>
<feature type="transmembrane region" description="Helical" evidence="1">
    <location>
        <begin position="295"/>
        <end position="315"/>
    </location>
</feature>
<feature type="transmembrane region" description="Helical" evidence="1">
    <location>
        <begin position="323"/>
        <end position="343"/>
    </location>
</feature>
<feature type="transmembrane region" description="Helical" evidence="1">
    <location>
        <begin position="354"/>
        <end position="374"/>
    </location>
</feature>
<feature type="transmembrane region" description="Helical" evidence="1">
    <location>
        <begin position="395"/>
        <end position="415"/>
    </location>
</feature>
<feature type="transmembrane region" description="Helical" evidence="1">
    <location>
        <begin position="418"/>
        <end position="438"/>
    </location>
</feature>
<feature type="transmembrane region" description="Helical" evidence="1">
    <location>
        <begin position="484"/>
        <end position="504"/>
    </location>
</feature>
<sequence>MIWHVQNENFILDSTRIFMKAFHLLLFDGSFIFPECILIFGLILLLMIDSTSDQKDIPWLYFISSTSLVMSITALLFRWREEPMISFSGNFQTNNFNEIFQFLILLCSTLCIPLSVEYIECTEMAIAEFLLFVLTATLGGMFLCGANDLITIFVAPECFSLCSYLLSGYTKKDVRSNEATTKYLLMGGASSSILVHGFSWLYGSSGGEIELQEIVNGLINTQMYNSPGISIALIFITVGIGFKLSPAPSHQWTPDVYEGSPTPVVAFLSVTSKVAASASATRIFDIPFYFSSNEWHLLLEILAILSMILGNLIAITQTSMKRMLAYSSIGQIGYVIIGIIVGNSNGGYASMITYMLFYISMNLGTFACIVLFGLRTGTDNIRDYAGLYTKDPFLALSLAPCLLSLGGLPPLAGFFGKLHLFWCGWQAGLYFLVSIGLLTSVVSIYYYLKIIKLLMTGRNQEITPHVRNYRRSPLRSNNSIELSMIVCVIASTIPGISMNPIIAIAQDTLF</sequence>
<geneLocation type="chloroplast"/>
<dbReference type="EC" id="7.1.1.-" evidence="1"/>
<dbReference type="EMBL" id="AP009123">
    <property type="protein sequence ID" value="BAF41291.1"/>
    <property type="molecule type" value="Genomic_DNA"/>
</dbReference>
<dbReference type="SMR" id="P0CC64"/>
<dbReference type="GO" id="GO:0009535">
    <property type="term" value="C:chloroplast thylakoid membrane"/>
    <property type="evidence" value="ECO:0007669"/>
    <property type="project" value="UniProtKB-SubCell"/>
</dbReference>
<dbReference type="GO" id="GO:0008137">
    <property type="term" value="F:NADH dehydrogenase (ubiquinone) activity"/>
    <property type="evidence" value="ECO:0007669"/>
    <property type="project" value="InterPro"/>
</dbReference>
<dbReference type="GO" id="GO:0048038">
    <property type="term" value="F:quinone binding"/>
    <property type="evidence" value="ECO:0007669"/>
    <property type="project" value="UniProtKB-KW"/>
</dbReference>
<dbReference type="GO" id="GO:0042773">
    <property type="term" value="P:ATP synthesis coupled electron transport"/>
    <property type="evidence" value="ECO:0007669"/>
    <property type="project" value="InterPro"/>
</dbReference>
<dbReference type="GO" id="GO:0019684">
    <property type="term" value="P:photosynthesis, light reaction"/>
    <property type="evidence" value="ECO:0007669"/>
    <property type="project" value="UniProtKB-UniRule"/>
</dbReference>
<dbReference type="HAMAP" id="MF_00445">
    <property type="entry name" value="NDH1_NuoN_1"/>
    <property type="match status" value="1"/>
</dbReference>
<dbReference type="InterPro" id="IPR010096">
    <property type="entry name" value="NADH-Q_OxRdtase_suN/2"/>
</dbReference>
<dbReference type="InterPro" id="IPR001750">
    <property type="entry name" value="ND/Mrp_TM"/>
</dbReference>
<dbReference type="InterPro" id="IPR045693">
    <property type="entry name" value="Ndh2_N"/>
</dbReference>
<dbReference type="NCBIfam" id="TIGR01770">
    <property type="entry name" value="NDH_I_N"/>
    <property type="match status" value="1"/>
</dbReference>
<dbReference type="NCBIfam" id="NF002701">
    <property type="entry name" value="PRK02504.1"/>
    <property type="match status" value="1"/>
</dbReference>
<dbReference type="PANTHER" id="PTHR22773">
    <property type="entry name" value="NADH DEHYDROGENASE"/>
    <property type="match status" value="1"/>
</dbReference>
<dbReference type="Pfam" id="PF19530">
    <property type="entry name" value="Ndh2_N"/>
    <property type="match status" value="1"/>
</dbReference>
<dbReference type="Pfam" id="PF00361">
    <property type="entry name" value="Proton_antipo_M"/>
    <property type="match status" value="1"/>
</dbReference>
<dbReference type="PRINTS" id="PR01434">
    <property type="entry name" value="NADHDHGNASE5"/>
</dbReference>
<keyword id="KW-0150">Chloroplast</keyword>
<keyword id="KW-0472">Membrane</keyword>
<keyword id="KW-0520">NAD</keyword>
<keyword id="KW-0521">NADP</keyword>
<keyword id="KW-0934">Plastid</keyword>
<keyword id="KW-0618">Plastoquinone</keyword>
<keyword id="KW-0874">Quinone</keyword>
<keyword id="KW-0793">Thylakoid</keyword>
<keyword id="KW-1278">Translocase</keyword>
<keyword id="KW-0812">Transmembrane</keyword>
<keyword id="KW-1133">Transmembrane helix</keyword>
<keyword id="KW-0813">Transport</keyword>
<proteinExistence type="inferred from homology"/>
<protein>
    <recommendedName>
        <fullName evidence="1">NAD(P)H-quinone oxidoreductase subunit 2 A, chloroplastic</fullName>
        <ecNumber evidence="1">7.1.1.-</ecNumber>
    </recommendedName>
    <alternativeName>
        <fullName evidence="1">NAD(P)H dehydrogenase, subunit 2 A</fullName>
    </alternativeName>
    <alternativeName>
        <fullName evidence="1">NADH-plastoquinone oxidoreductase subunit 2 A</fullName>
    </alternativeName>
</protein>
<name>NU2C1_GOSBA</name>
<comment type="function">
    <text evidence="1">NDH shuttles electrons from NAD(P)H:plastoquinone, via FMN and iron-sulfur (Fe-S) centers, to quinones in the photosynthetic chain and possibly in a chloroplast respiratory chain. The immediate electron acceptor for the enzyme in this species is believed to be plastoquinone. Couples the redox reaction to proton translocation, and thus conserves the redox energy in a proton gradient.</text>
</comment>
<comment type="catalytic activity">
    <reaction evidence="1">
        <text>a plastoquinone + NADH + (n+1) H(+)(in) = a plastoquinol + NAD(+) + n H(+)(out)</text>
        <dbReference type="Rhea" id="RHEA:42608"/>
        <dbReference type="Rhea" id="RHEA-COMP:9561"/>
        <dbReference type="Rhea" id="RHEA-COMP:9562"/>
        <dbReference type="ChEBI" id="CHEBI:15378"/>
        <dbReference type="ChEBI" id="CHEBI:17757"/>
        <dbReference type="ChEBI" id="CHEBI:57540"/>
        <dbReference type="ChEBI" id="CHEBI:57945"/>
        <dbReference type="ChEBI" id="CHEBI:62192"/>
    </reaction>
</comment>
<comment type="catalytic activity">
    <reaction evidence="1">
        <text>a plastoquinone + NADPH + (n+1) H(+)(in) = a plastoquinol + NADP(+) + n H(+)(out)</text>
        <dbReference type="Rhea" id="RHEA:42612"/>
        <dbReference type="Rhea" id="RHEA-COMP:9561"/>
        <dbReference type="Rhea" id="RHEA-COMP:9562"/>
        <dbReference type="ChEBI" id="CHEBI:15378"/>
        <dbReference type="ChEBI" id="CHEBI:17757"/>
        <dbReference type="ChEBI" id="CHEBI:57783"/>
        <dbReference type="ChEBI" id="CHEBI:58349"/>
        <dbReference type="ChEBI" id="CHEBI:62192"/>
    </reaction>
</comment>
<comment type="subunit">
    <text evidence="1">NDH is composed of at least 16 different subunits, 5 of which are encoded in the nucleus.</text>
</comment>
<comment type="subcellular location">
    <subcellularLocation>
        <location evidence="1">Plastid</location>
        <location evidence="1">Chloroplast thylakoid membrane</location>
        <topology evidence="1">Multi-pass membrane protein</topology>
    </subcellularLocation>
</comment>
<comment type="similarity">
    <text evidence="1">Belongs to the complex I subunit 2 family.</text>
</comment>
<accession>P0CC64</accession>
<accession>A0ZZ79</accession>
<reference key="1">
    <citation type="journal article" date="2006" name="Genes Genet. Syst.">
        <title>Complete nucleotide sequence of the cotton (Gossypium barbadense L.) chloroplast genome with a comparative analysis of sequences among 9 dicot plants.</title>
        <authorList>
            <person name="Ibrahim R.I.H."/>
            <person name="Azuma J."/>
            <person name="Sakamoto M."/>
        </authorList>
    </citation>
    <scope>NUCLEOTIDE SEQUENCE [LARGE SCALE GENOMIC DNA]</scope>
</reference>
<organism>
    <name type="scientific">Gossypium barbadense</name>
    <name type="common">Sea Island cotton</name>
    <name type="synonym">Hibiscus barbadensis</name>
    <dbReference type="NCBI Taxonomy" id="3634"/>
    <lineage>
        <taxon>Eukaryota</taxon>
        <taxon>Viridiplantae</taxon>
        <taxon>Streptophyta</taxon>
        <taxon>Embryophyta</taxon>
        <taxon>Tracheophyta</taxon>
        <taxon>Spermatophyta</taxon>
        <taxon>Magnoliopsida</taxon>
        <taxon>eudicotyledons</taxon>
        <taxon>Gunneridae</taxon>
        <taxon>Pentapetalae</taxon>
        <taxon>rosids</taxon>
        <taxon>malvids</taxon>
        <taxon>Malvales</taxon>
        <taxon>Malvaceae</taxon>
        <taxon>Malvoideae</taxon>
        <taxon>Gossypium</taxon>
    </lineage>
</organism>
<evidence type="ECO:0000255" key="1">
    <source>
        <dbReference type="HAMAP-Rule" id="MF_00445"/>
    </source>
</evidence>
<gene>
    <name evidence="1" type="primary">ndhB1</name>
</gene>